<sequence>MAKLITLGEILIEFNALSPGPLRHVSYFEKHVAGSEANYCVAFIKQGNECGIIAKVGDDEFGYNAIEWLRGQGVDVSHMKIDPSAPTGIFFIQRHYPVPLKSESIYYRKGSAGSKLSPEDVDEEYVKSADLVHSSGITLAISSTAKEAVYKAFEIASNRSFDTNIRLKLWSAEEAKREILKLLSKFHLKFLITDTDDSKIILGESDPDKAAKAFSDYAEIIVMKLGPKGAIVYYDGKKYYSSGYQVPVEDVTGAGDALGGTFLSLYYKGFEMEKALDYAIVASTLNVMIRGDQENLPTTKDIETFLREMKK</sequence>
<evidence type="ECO:0000250" key="1">
    <source>
        <dbReference type="UniProtKB" id="Q97U29"/>
    </source>
</evidence>
<evidence type="ECO:0000269" key="2">
    <source>
    </source>
</evidence>
<evidence type="ECO:0000303" key="3">
    <source>
    </source>
</evidence>
<evidence type="ECO:0000305" key="4"/>
<evidence type="ECO:0000305" key="5">
    <source ref="4"/>
</evidence>
<evidence type="ECO:0000312" key="6">
    <source>
        <dbReference type="EMBL" id="BAB67588.1"/>
    </source>
</evidence>
<evidence type="ECO:0007744" key="7">
    <source>
        <dbReference type="PDB" id="1WYE"/>
    </source>
</evidence>
<evidence type="ECO:0007744" key="8">
    <source>
        <dbReference type="PDB" id="2DCN"/>
    </source>
</evidence>
<evidence type="ECO:0007829" key="9">
    <source>
        <dbReference type="PDB" id="2DCN"/>
    </source>
</evidence>
<reference key="1">
    <citation type="journal article" date="2001" name="DNA Res.">
        <title>Complete genome sequence of an aerobic thermoacidophilic Crenarchaeon, Sulfolobus tokodaii strain7.</title>
        <authorList>
            <person name="Kawarabayasi Y."/>
            <person name="Hino Y."/>
            <person name="Horikawa H."/>
            <person name="Jin-no K."/>
            <person name="Takahashi M."/>
            <person name="Sekine M."/>
            <person name="Baba S."/>
            <person name="Ankai A."/>
            <person name="Kosugi H."/>
            <person name="Hosoyama A."/>
            <person name="Fukui S."/>
            <person name="Nagai Y."/>
            <person name="Nishijima K."/>
            <person name="Otsuka R."/>
            <person name="Nakazawa H."/>
            <person name="Takamiya M."/>
            <person name="Kato Y."/>
            <person name="Yoshizawa T."/>
            <person name="Tanaka T."/>
            <person name="Kudoh Y."/>
            <person name="Yamazaki J."/>
            <person name="Kushida N."/>
            <person name="Oguchi A."/>
            <person name="Aoki K."/>
            <person name="Masuda S."/>
            <person name="Yanagii M."/>
            <person name="Nishimura M."/>
            <person name="Yamagishi A."/>
            <person name="Oshima T."/>
            <person name="Kikuchi H."/>
        </authorList>
    </citation>
    <scope>NUCLEOTIDE SEQUENCE [LARGE SCALE GENOMIC DNA]</scope>
    <source>
        <strain>DSM 16993 / JCM 10545 / NBRC 100140 / 7</strain>
    </source>
</reference>
<reference key="2">
    <citation type="journal article" date="2007" name="Protein Expr. Purif.">
        <title>Gene expression and characterization of 2-keto-3-deoxygluconate kinase, a key enzyme in the modified Entner-Doudoroff pathway of the aerobic and acidophilic hyperthermophile Sulfolobus tokodaii.</title>
        <authorList>
            <person name="Ohshima T."/>
            <person name="Kawakami R."/>
            <person name="Kanai Y."/>
            <person name="Goda S."/>
            <person name="Sakuraba H."/>
        </authorList>
    </citation>
    <scope>PROTEIN SEQUENCE OF 1-6</scope>
    <scope>FUNCTION</scope>
    <scope>CATALYTIC ACTIVITY</scope>
    <scope>COFACTOR</scope>
    <scope>BIOPHYSICOCHEMICAL PROPERTIES</scope>
    <scope>SUBUNIT</scope>
</reference>
<reference evidence="7" key="3">
    <citation type="submission" date="2005-02" db="PDB data bank">
        <title>Crystal structure of 2-keto-3-deoxygluconate kinase from Sulfolobus tokodaii.</title>
        <authorList>
            <person name="Toyoda T."/>
            <person name="Suzuki K."/>
            <person name="Hossain M.T."/>
            <person name="Koike I."/>
            <person name="Sekiguchi T."/>
            <person name="Takenaka A."/>
        </authorList>
    </citation>
    <scope>X-RAY CRYSTALLOGRAPHY (2.80 ANGSTROMS)</scope>
</reference>
<reference evidence="8" key="4">
    <citation type="submission" date="2006-01" db="PDB data bank">
        <title>Crystal structure of 2-keto-3-deoxygluconate kinase from Sulfolobus tokodaii complexed with 2-keto-6-phosphogluconate.</title>
        <authorList>
            <person name="Okazaki S."/>
            <person name="Onda H."/>
            <person name="Suzuki A."/>
            <person name="Kuramitsu S."/>
            <person name="Masui R."/>
            <person name="Yamane T."/>
        </authorList>
    </citation>
    <scope>X-RAY CRYSTALLOGRAPHY (2.25 ANGSTROMS) IN COMPLEX WITH 2-KETO-6-PHOSPHATE-D-GLUCONIC ACID AND ADP</scope>
</reference>
<comment type="function">
    <text evidence="2">Involved in the degradation of glucose via the semi-phosphorylative Entner-Doudoroff pathway. Catalyzes the phosphorylation of 2-keto-3-deoxygluconate (KDG) to produce 2-keto-3-deoxy-6-phosphogluconate (KDPG). Can also use GTP, but not ADP or AMP, as a phosphoryl donor and 2-keto-D-gluconate (KG) as a phosphoryl acceptor.</text>
</comment>
<comment type="catalytic activity">
    <reaction evidence="2">
        <text>2-dehydro-3-deoxy-D-gluconate + ATP = 2-dehydro-3-deoxy-6-phospho-D-gluconate + ADP + H(+)</text>
        <dbReference type="Rhea" id="RHEA:14797"/>
        <dbReference type="ChEBI" id="CHEBI:15378"/>
        <dbReference type="ChEBI" id="CHEBI:30616"/>
        <dbReference type="ChEBI" id="CHEBI:57569"/>
        <dbReference type="ChEBI" id="CHEBI:57990"/>
        <dbReference type="ChEBI" id="CHEBI:456216"/>
        <dbReference type="EC" id="2.7.1.45"/>
    </reaction>
    <physiologicalReaction direction="left-to-right" evidence="2">
        <dbReference type="Rhea" id="RHEA:14798"/>
    </physiologicalReaction>
</comment>
<comment type="cofactor">
    <cofactor evidence="2">
        <name>a divalent metal cation</name>
        <dbReference type="ChEBI" id="CHEBI:60240"/>
    </cofactor>
    <text evidence="2">Mg(2+) is the most effective ion, but it can be replaced with Co(2+), Ni(2+), Zn(2+) or Mn(2+).</text>
</comment>
<comment type="biophysicochemical properties">
    <kinetics>
        <KM evidence="2">0.027 mM for KDG (at 50 degrees Celsius)</KM>
        <KM evidence="2">1.3 mM for KG (at 50 degrees Celsius)</KM>
        <KM evidence="2">0.036 mM for ATP (at 50 degrees Celsius, in the presence of KDG)</KM>
        <KM evidence="2">0.11 mM for ATP (at 50 degrees Celsius, in the presence of KG)</KM>
        <Vmax evidence="2">4.13 umol/min/mg enzyme with KDG as substrate</Vmax>
        <Vmax evidence="2">13.26 umol/min/mg enzyme with KG as substrate</Vmax>
        <text evidence="2">kcat is 8.26 sec(-1) with KDG as substrate. kcat is 26.3 sec(-1) with KG as substrate.</text>
    </kinetics>
    <phDependence>
        <text evidence="2">Optimum pH is around 8.5.</text>
    </phDependence>
    <temperatureDependence>
        <text evidence="2">Optimum temperature is 80 degrees Celsius. Extremely thermostable.</text>
    </temperatureDependence>
</comment>
<comment type="pathway">
    <text evidence="4">Carbohydrate acid metabolism; 2-dehydro-3-deoxy-D-gluconate degradation; D-glyceraldehyde 3-phosphate and pyruvate from 2-dehydro-3-deoxy-D-gluconate: step 1/2.</text>
</comment>
<comment type="subunit">
    <text evidence="2">Homotetramer.</text>
</comment>
<comment type="similarity">
    <text evidence="4">Belongs to the carbohydrate kinase PfkB family.</text>
</comment>
<keyword id="KW-0002">3D-structure</keyword>
<keyword id="KW-0067">ATP-binding</keyword>
<keyword id="KW-0119">Carbohydrate metabolism</keyword>
<keyword id="KW-0903">Direct protein sequencing</keyword>
<keyword id="KW-0418">Kinase</keyword>
<keyword id="KW-0547">Nucleotide-binding</keyword>
<keyword id="KW-1185">Reference proteome</keyword>
<keyword id="KW-0808">Transferase</keyword>
<dbReference type="EC" id="2.7.1.45" evidence="2"/>
<dbReference type="EMBL" id="BA000023">
    <property type="protein sequence ID" value="BAB67588.1"/>
    <property type="molecule type" value="Genomic_DNA"/>
</dbReference>
<dbReference type="RefSeq" id="WP_010980563.1">
    <property type="nucleotide sequence ID" value="NC_003106.2"/>
</dbReference>
<dbReference type="PDB" id="1WYE">
    <property type="method" value="X-ray"/>
    <property type="resolution" value="2.80 A"/>
    <property type="chains" value="A/B/C/D/E/F=1-311"/>
</dbReference>
<dbReference type="PDB" id="2DCN">
    <property type="method" value="X-ray"/>
    <property type="resolution" value="2.25 A"/>
    <property type="chains" value="A/B/C/D/E/F/G/H/I/J/K/L=1-311"/>
</dbReference>
<dbReference type="PDBsum" id="1WYE"/>
<dbReference type="PDBsum" id="2DCN"/>
<dbReference type="SMR" id="Q96XN9"/>
<dbReference type="STRING" id="273063.STK_24780"/>
<dbReference type="GeneID" id="1460561"/>
<dbReference type="KEGG" id="sto:STK_24780"/>
<dbReference type="PATRIC" id="fig|273063.9.peg.2799"/>
<dbReference type="eggNOG" id="arCOG00014">
    <property type="taxonomic scope" value="Archaea"/>
</dbReference>
<dbReference type="OrthoDB" id="96179at2157"/>
<dbReference type="BRENDA" id="2.7.1.45">
    <property type="organism ID" value="15396"/>
</dbReference>
<dbReference type="UniPathway" id="UPA00856">
    <property type="reaction ID" value="UER00828"/>
</dbReference>
<dbReference type="EvolutionaryTrace" id="Q96XN9"/>
<dbReference type="Proteomes" id="UP000001015">
    <property type="component" value="Chromosome"/>
</dbReference>
<dbReference type="GO" id="GO:0008673">
    <property type="term" value="F:2-dehydro-3-deoxygluconokinase activity"/>
    <property type="evidence" value="ECO:0007669"/>
    <property type="project" value="UniProtKB-EC"/>
</dbReference>
<dbReference type="GO" id="GO:0005524">
    <property type="term" value="F:ATP binding"/>
    <property type="evidence" value="ECO:0007669"/>
    <property type="project" value="UniProtKB-KW"/>
</dbReference>
<dbReference type="CDD" id="cd01166">
    <property type="entry name" value="KdgK"/>
    <property type="match status" value="1"/>
</dbReference>
<dbReference type="Gene3D" id="3.40.1190.20">
    <property type="match status" value="1"/>
</dbReference>
<dbReference type="InterPro" id="IPR054939">
    <property type="entry name" value="KDG_KDGal_kin"/>
</dbReference>
<dbReference type="InterPro" id="IPR050306">
    <property type="entry name" value="PfkB_Carbo_kinase"/>
</dbReference>
<dbReference type="InterPro" id="IPR011611">
    <property type="entry name" value="PfkB_dom"/>
</dbReference>
<dbReference type="InterPro" id="IPR029056">
    <property type="entry name" value="Ribokinase-like"/>
</dbReference>
<dbReference type="NCBIfam" id="NF040938">
    <property type="entry name" value="KDG_KDGal_kin"/>
    <property type="match status" value="1"/>
</dbReference>
<dbReference type="PANTHER" id="PTHR43085">
    <property type="entry name" value="HEXOKINASE FAMILY MEMBER"/>
    <property type="match status" value="1"/>
</dbReference>
<dbReference type="PANTHER" id="PTHR43085:SF1">
    <property type="entry name" value="PSEUDOURIDINE KINASE-RELATED"/>
    <property type="match status" value="1"/>
</dbReference>
<dbReference type="Pfam" id="PF00294">
    <property type="entry name" value="PfkB"/>
    <property type="match status" value="1"/>
</dbReference>
<dbReference type="SUPFAM" id="SSF53613">
    <property type="entry name" value="Ribokinase-like"/>
    <property type="match status" value="1"/>
</dbReference>
<accession>Q96XN9</accession>
<gene>
    <name evidence="6" type="primary">kdgK</name>
    <name evidence="6" type="synonym">ST2478</name>
    <name evidence="6" type="ordered locus">STK_24780</name>
</gene>
<name>KDGK_SULTO</name>
<organism>
    <name type="scientific">Sulfurisphaera tokodaii (strain DSM 16993 / JCM 10545 / NBRC 100140 / 7)</name>
    <name type="common">Sulfolobus tokodaii</name>
    <dbReference type="NCBI Taxonomy" id="273063"/>
    <lineage>
        <taxon>Archaea</taxon>
        <taxon>Thermoproteota</taxon>
        <taxon>Thermoprotei</taxon>
        <taxon>Sulfolobales</taxon>
        <taxon>Sulfolobaceae</taxon>
        <taxon>Sulfurisphaera</taxon>
    </lineage>
</organism>
<feature type="chain" id="PRO_0000449271" description="2-dehydro-3-deoxygluconokinase">
    <location>
        <begin position="1"/>
        <end position="311"/>
    </location>
</feature>
<feature type="active site" description="Proton acceptor" evidence="1">
    <location>
        <position position="256"/>
    </location>
</feature>
<feature type="binding site" evidence="5">
    <location>
        <begin position="34"/>
        <end position="35"/>
    </location>
    <ligand>
        <name>substrate</name>
    </ligand>
</feature>
<feature type="binding site" evidence="5">
    <location>
        <begin position="106"/>
        <end position="108"/>
    </location>
    <ligand>
        <name>substrate</name>
    </ligand>
</feature>
<feature type="binding site" evidence="1">
    <location>
        <begin position="164"/>
        <end position="166"/>
    </location>
    <ligand>
        <name>ATP</name>
        <dbReference type="ChEBI" id="CHEBI:30616"/>
    </ligand>
</feature>
<feature type="binding site" evidence="5">
    <location>
        <position position="166"/>
    </location>
    <ligand>
        <name>substrate</name>
    </ligand>
</feature>
<feature type="binding site" evidence="5">
    <location>
        <begin position="224"/>
        <end position="229"/>
    </location>
    <ligand>
        <name>ATP</name>
        <dbReference type="ChEBI" id="CHEBI:30616"/>
    </ligand>
</feature>
<feature type="binding site" evidence="1">
    <location>
        <begin position="253"/>
        <end position="256"/>
    </location>
    <ligand>
        <name>ATP</name>
        <dbReference type="ChEBI" id="CHEBI:30616"/>
    </ligand>
</feature>
<feature type="binding site" evidence="5">
    <location>
        <position position="253"/>
    </location>
    <ligand>
        <name>substrate</name>
    </ligand>
</feature>
<feature type="binding site" evidence="5">
    <location>
        <position position="256"/>
    </location>
    <ligand>
        <name>substrate</name>
    </ligand>
</feature>
<feature type="binding site" evidence="5">
    <location>
        <position position="283"/>
    </location>
    <ligand>
        <name>ATP</name>
        <dbReference type="ChEBI" id="CHEBI:30616"/>
    </ligand>
</feature>
<feature type="binding site" evidence="5">
    <location>
        <position position="292"/>
    </location>
    <ligand>
        <name>substrate</name>
    </ligand>
</feature>
<feature type="strand" evidence="9">
    <location>
        <begin position="3"/>
        <end position="8"/>
    </location>
</feature>
<feature type="strand" evidence="9">
    <location>
        <begin position="11"/>
        <end position="20"/>
    </location>
</feature>
<feature type="helix" evidence="9">
    <location>
        <begin position="22"/>
        <end position="24"/>
    </location>
</feature>
<feature type="strand" evidence="9">
    <location>
        <begin position="27"/>
        <end position="33"/>
    </location>
</feature>
<feature type="helix" evidence="9">
    <location>
        <begin position="35"/>
        <end position="45"/>
    </location>
</feature>
<feature type="strand" evidence="9">
    <location>
        <begin position="49"/>
        <end position="53"/>
    </location>
</feature>
<feature type="strand" evidence="9">
    <location>
        <begin position="55"/>
        <end position="59"/>
    </location>
</feature>
<feature type="helix" evidence="9">
    <location>
        <begin position="60"/>
        <end position="71"/>
    </location>
</feature>
<feature type="strand" evidence="9">
    <location>
        <begin position="80"/>
        <end position="82"/>
    </location>
</feature>
<feature type="strand" evidence="9">
    <location>
        <begin position="89"/>
        <end position="95"/>
    </location>
</feature>
<feature type="strand" evidence="9">
    <location>
        <begin position="102"/>
        <end position="107"/>
    </location>
</feature>
<feature type="helix" evidence="9">
    <location>
        <begin position="113"/>
        <end position="115"/>
    </location>
</feature>
<feature type="helix" evidence="9">
    <location>
        <begin position="118"/>
        <end position="120"/>
    </location>
</feature>
<feature type="helix" evidence="9">
    <location>
        <begin position="123"/>
        <end position="126"/>
    </location>
</feature>
<feature type="strand" evidence="9">
    <location>
        <begin position="130"/>
        <end position="135"/>
    </location>
</feature>
<feature type="helix" evidence="9">
    <location>
        <begin position="136"/>
        <end position="140"/>
    </location>
</feature>
<feature type="helix" evidence="9">
    <location>
        <begin position="143"/>
        <end position="155"/>
    </location>
</feature>
<feature type="strand" evidence="9">
    <location>
        <begin position="157"/>
        <end position="162"/>
    </location>
</feature>
<feature type="turn" evidence="9">
    <location>
        <begin position="167"/>
        <end position="169"/>
    </location>
</feature>
<feature type="helix" evidence="9">
    <location>
        <begin position="172"/>
        <end position="185"/>
    </location>
</feature>
<feature type="strand" evidence="9">
    <location>
        <begin position="188"/>
        <end position="194"/>
    </location>
</feature>
<feature type="helix" evidence="9">
    <location>
        <begin position="195"/>
        <end position="202"/>
    </location>
</feature>
<feature type="helix" evidence="9">
    <location>
        <begin position="207"/>
        <end position="214"/>
    </location>
</feature>
<feature type="turn" evidence="9">
    <location>
        <begin position="215"/>
        <end position="217"/>
    </location>
</feature>
<feature type="strand" evidence="9">
    <location>
        <begin position="218"/>
        <end position="226"/>
    </location>
</feature>
<feature type="strand" evidence="9">
    <location>
        <begin position="229"/>
        <end position="234"/>
    </location>
</feature>
<feature type="strand" evidence="9">
    <location>
        <begin position="237"/>
        <end position="242"/>
    </location>
</feature>
<feature type="helix" evidence="9">
    <location>
        <begin position="254"/>
        <end position="266"/>
    </location>
</feature>
<feature type="turn" evidence="9">
    <location>
        <begin position="267"/>
        <end position="269"/>
    </location>
</feature>
<feature type="helix" evidence="9">
    <location>
        <begin position="272"/>
        <end position="286"/>
    </location>
</feature>
<feature type="strand" evidence="9">
    <location>
        <begin position="289"/>
        <end position="293"/>
    </location>
</feature>
<feature type="helix" evidence="9">
    <location>
        <begin position="299"/>
        <end position="308"/>
    </location>
</feature>
<proteinExistence type="evidence at protein level"/>
<protein>
    <recommendedName>
        <fullName evidence="4">2-dehydro-3-deoxygluconokinase</fullName>
        <ecNumber evidence="2">2.7.1.45</ecNumber>
    </recommendedName>
    <alternativeName>
        <fullName evidence="3">2-keto-3-deoxy-D-gluconate kinase</fullName>
        <shortName evidence="4">KDG kinase</shortName>
        <shortName evidence="3">KDGK</shortName>
    </alternativeName>
</protein>